<reference key="1">
    <citation type="submission" date="2008-06" db="EMBL/GenBank/DDBJ databases">
        <title>Complete sequence of Stenotrophomonas maltophilia R551-3.</title>
        <authorList>
            <consortium name="US DOE Joint Genome Institute"/>
            <person name="Lucas S."/>
            <person name="Copeland A."/>
            <person name="Lapidus A."/>
            <person name="Glavina del Rio T."/>
            <person name="Dalin E."/>
            <person name="Tice H."/>
            <person name="Pitluck S."/>
            <person name="Chain P."/>
            <person name="Malfatti S."/>
            <person name="Shin M."/>
            <person name="Vergez L."/>
            <person name="Lang D."/>
            <person name="Schmutz J."/>
            <person name="Larimer F."/>
            <person name="Land M."/>
            <person name="Hauser L."/>
            <person name="Kyrpides N."/>
            <person name="Mikhailova N."/>
            <person name="Taghavi S."/>
            <person name="Monchy S."/>
            <person name="Newman L."/>
            <person name="Vangronsveld J."/>
            <person name="van der Lelie D."/>
            <person name="Richardson P."/>
        </authorList>
    </citation>
    <scope>NUCLEOTIDE SEQUENCE [LARGE SCALE GENOMIC DNA]</scope>
    <source>
        <strain>R551-3</strain>
    </source>
</reference>
<proteinExistence type="inferred from homology"/>
<name>NUOD1_STRM5</name>
<keyword id="KW-0997">Cell inner membrane</keyword>
<keyword id="KW-1003">Cell membrane</keyword>
<keyword id="KW-0472">Membrane</keyword>
<keyword id="KW-0520">NAD</keyword>
<keyword id="KW-0874">Quinone</keyword>
<keyword id="KW-1278">Translocase</keyword>
<keyword id="KW-0813">Transport</keyword>
<keyword id="KW-0830">Ubiquinone</keyword>
<feature type="chain" id="PRO_0000357936" description="NADH-quinone oxidoreductase subunit D 1">
    <location>
        <begin position="1"/>
        <end position="436"/>
    </location>
</feature>
<protein>
    <recommendedName>
        <fullName evidence="1">NADH-quinone oxidoreductase subunit D 1</fullName>
        <ecNumber evidence="1">7.1.1.-</ecNumber>
    </recommendedName>
    <alternativeName>
        <fullName evidence="1">NADH dehydrogenase I subunit D 1</fullName>
    </alternativeName>
    <alternativeName>
        <fullName evidence="1">NDH-1 subunit D 1</fullName>
    </alternativeName>
</protein>
<organism>
    <name type="scientific">Stenotrophomonas maltophilia (strain R551-3)</name>
    <dbReference type="NCBI Taxonomy" id="391008"/>
    <lineage>
        <taxon>Bacteria</taxon>
        <taxon>Pseudomonadati</taxon>
        <taxon>Pseudomonadota</taxon>
        <taxon>Gammaproteobacteria</taxon>
        <taxon>Lysobacterales</taxon>
        <taxon>Lysobacteraceae</taxon>
        <taxon>Stenotrophomonas</taxon>
        <taxon>Stenotrophomonas maltophilia group</taxon>
    </lineage>
</organism>
<gene>
    <name evidence="1" type="primary">nuoD1</name>
    <name type="ordered locus">Smal_2027</name>
</gene>
<sequence length="436" mass="49610">MNTERTMAGGPAPMRDGRRDTEIRNYVMNLGPQHPAAHGVLRLVLEMDGETVVRADPHVGLLHRGTEKLAESKPFNQSIGYMDRLDYVSMMCNEHAYVRAIETLLGIEAPIRAQYIRTMFDEITRILNHLMNIGTGALDLGAMAVMLYAFREREELMDCYEAVSGARMHATYYRPGGVYRELPEQMPKYKESRWKTGKQLRRLNAAREGSLLDFIENFTREFPNRIDEYETLLTDNRIWKQRTVGIGVVSPQQAMEWGMTGVMLRGSGVAWDLRKKRPYAKYDAVDFDIPVGTAGDCYDRYLCRVAEMRQSNRIIRQCVDWLRANPGPVMLHNFKVAPPSRQEMKSDMEALIHHFKLFSEGYQVPAGETYAAVEAPKGEFGCYLISDGANKPFRVHLRAPGFAHLSSLDEIVRGHMLADVVAMIGTYDIVFGEVDR</sequence>
<dbReference type="EC" id="7.1.1.-" evidence="1"/>
<dbReference type="EMBL" id="CP001111">
    <property type="protein sequence ID" value="ACF51731.1"/>
    <property type="molecule type" value="Genomic_DNA"/>
</dbReference>
<dbReference type="SMR" id="B4SJH6"/>
<dbReference type="STRING" id="391008.Smal_2027"/>
<dbReference type="KEGG" id="smt:Smal_2027"/>
<dbReference type="eggNOG" id="COG0649">
    <property type="taxonomic scope" value="Bacteria"/>
</dbReference>
<dbReference type="HOGENOM" id="CLU_015134_1_1_6"/>
<dbReference type="Proteomes" id="UP000001867">
    <property type="component" value="Chromosome"/>
</dbReference>
<dbReference type="GO" id="GO:0005886">
    <property type="term" value="C:plasma membrane"/>
    <property type="evidence" value="ECO:0007669"/>
    <property type="project" value="UniProtKB-SubCell"/>
</dbReference>
<dbReference type="GO" id="GO:0051287">
    <property type="term" value="F:NAD binding"/>
    <property type="evidence" value="ECO:0007669"/>
    <property type="project" value="InterPro"/>
</dbReference>
<dbReference type="GO" id="GO:0050136">
    <property type="term" value="F:NADH:ubiquinone reductase (non-electrogenic) activity"/>
    <property type="evidence" value="ECO:0007669"/>
    <property type="project" value="UniProtKB-UniRule"/>
</dbReference>
<dbReference type="GO" id="GO:0048038">
    <property type="term" value="F:quinone binding"/>
    <property type="evidence" value="ECO:0007669"/>
    <property type="project" value="UniProtKB-KW"/>
</dbReference>
<dbReference type="FunFam" id="1.10.645.10:FF:000005">
    <property type="entry name" value="NADH-quinone oxidoreductase subunit D"/>
    <property type="match status" value="1"/>
</dbReference>
<dbReference type="Gene3D" id="1.10.645.10">
    <property type="entry name" value="Cytochrome-c3 Hydrogenase, chain B"/>
    <property type="match status" value="1"/>
</dbReference>
<dbReference type="HAMAP" id="MF_01358">
    <property type="entry name" value="NDH1_NuoD"/>
    <property type="match status" value="1"/>
</dbReference>
<dbReference type="InterPro" id="IPR001135">
    <property type="entry name" value="NADH_Q_OxRdtase_suD"/>
</dbReference>
<dbReference type="InterPro" id="IPR014029">
    <property type="entry name" value="NADH_UbQ_OxRdtase_49kDa_CS"/>
</dbReference>
<dbReference type="InterPro" id="IPR022885">
    <property type="entry name" value="NDH1_su_D/H"/>
</dbReference>
<dbReference type="InterPro" id="IPR029014">
    <property type="entry name" value="NiFe-Hase_large"/>
</dbReference>
<dbReference type="NCBIfam" id="TIGR01962">
    <property type="entry name" value="NuoD"/>
    <property type="match status" value="1"/>
</dbReference>
<dbReference type="NCBIfam" id="NF004739">
    <property type="entry name" value="PRK06075.1"/>
    <property type="match status" value="1"/>
</dbReference>
<dbReference type="PANTHER" id="PTHR11993:SF10">
    <property type="entry name" value="NADH DEHYDROGENASE [UBIQUINONE] IRON-SULFUR PROTEIN 2, MITOCHONDRIAL"/>
    <property type="match status" value="1"/>
</dbReference>
<dbReference type="PANTHER" id="PTHR11993">
    <property type="entry name" value="NADH-UBIQUINONE OXIDOREDUCTASE 49 KDA SUBUNIT"/>
    <property type="match status" value="1"/>
</dbReference>
<dbReference type="Pfam" id="PF00346">
    <property type="entry name" value="Complex1_49kDa"/>
    <property type="match status" value="1"/>
</dbReference>
<dbReference type="SUPFAM" id="SSF56762">
    <property type="entry name" value="HydB/Nqo4-like"/>
    <property type="match status" value="1"/>
</dbReference>
<dbReference type="PROSITE" id="PS00535">
    <property type="entry name" value="COMPLEX1_49K"/>
    <property type="match status" value="1"/>
</dbReference>
<accession>B4SJH6</accession>
<comment type="function">
    <text evidence="1">NDH-1 shuttles electrons from NADH, via FMN and iron-sulfur (Fe-S) centers, to quinones in the respiratory chain. The immediate electron acceptor for the enzyme in this species is believed to be ubiquinone. Couples the redox reaction to proton translocation (for every two electrons transferred, four hydrogen ions are translocated across the cytoplasmic membrane), and thus conserves the redox energy in a proton gradient.</text>
</comment>
<comment type="catalytic activity">
    <reaction evidence="1">
        <text>a quinone + NADH + 5 H(+)(in) = a quinol + NAD(+) + 4 H(+)(out)</text>
        <dbReference type="Rhea" id="RHEA:57888"/>
        <dbReference type="ChEBI" id="CHEBI:15378"/>
        <dbReference type="ChEBI" id="CHEBI:24646"/>
        <dbReference type="ChEBI" id="CHEBI:57540"/>
        <dbReference type="ChEBI" id="CHEBI:57945"/>
        <dbReference type="ChEBI" id="CHEBI:132124"/>
    </reaction>
</comment>
<comment type="subunit">
    <text evidence="1">NDH-1 is composed of 14 different subunits. Subunits NuoB, C, D, E, F, and G constitute the peripheral sector of the complex.</text>
</comment>
<comment type="subcellular location">
    <subcellularLocation>
        <location evidence="1">Cell inner membrane</location>
        <topology evidence="1">Peripheral membrane protein</topology>
        <orientation evidence="1">Cytoplasmic side</orientation>
    </subcellularLocation>
</comment>
<comment type="similarity">
    <text evidence="1">Belongs to the complex I 49 kDa subunit family.</text>
</comment>
<evidence type="ECO:0000255" key="1">
    <source>
        <dbReference type="HAMAP-Rule" id="MF_01358"/>
    </source>
</evidence>